<reference key="1">
    <citation type="journal article" date="2009" name="J. Bacteriol.">
        <title>Genome sequences of three Agrobacterium biovars help elucidate the evolution of multichromosome genomes in bacteria.</title>
        <authorList>
            <person name="Slater S.C."/>
            <person name="Goldman B.S."/>
            <person name="Goodner B."/>
            <person name="Setubal J.C."/>
            <person name="Farrand S.K."/>
            <person name="Nester E.W."/>
            <person name="Burr T.J."/>
            <person name="Banta L."/>
            <person name="Dickerman A.W."/>
            <person name="Paulsen I."/>
            <person name="Otten L."/>
            <person name="Suen G."/>
            <person name="Welch R."/>
            <person name="Almeida N.F."/>
            <person name="Arnold F."/>
            <person name="Burton O.T."/>
            <person name="Du Z."/>
            <person name="Ewing A."/>
            <person name="Godsy E."/>
            <person name="Heisel S."/>
            <person name="Houmiel K.L."/>
            <person name="Jhaveri J."/>
            <person name="Lu J."/>
            <person name="Miller N.M."/>
            <person name="Norton S."/>
            <person name="Chen Q."/>
            <person name="Phoolcharoen W."/>
            <person name="Ohlin V."/>
            <person name="Ondrusek D."/>
            <person name="Pride N."/>
            <person name="Stricklin S.L."/>
            <person name="Sun J."/>
            <person name="Wheeler C."/>
            <person name="Wilson L."/>
            <person name="Zhu H."/>
            <person name="Wood D.W."/>
        </authorList>
    </citation>
    <scope>NUCLEOTIDE SEQUENCE [LARGE SCALE GENOMIC DNA]</scope>
    <source>
        <strain>K84 / ATCC BAA-868</strain>
    </source>
</reference>
<proteinExistence type="inferred from homology"/>
<comment type="catalytic activity">
    <reaction evidence="1">
        <text>1-(5-phospho-beta-D-ribosyl)-ATP + H2O = 1-(5-phospho-beta-D-ribosyl)-5'-AMP + diphosphate + H(+)</text>
        <dbReference type="Rhea" id="RHEA:22828"/>
        <dbReference type="ChEBI" id="CHEBI:15377"/>
        <dbReference type="ChEBI" id="CHEBI:15378"/>
        <dbReference type="ChEBI" id="CHEBI:33019"/>
        <dbReference type="ChEBI" id="CHEBI:59457"/>
        <dbReference type="ChEBI" id="CHEBI:73183"/>
        <dbReference type="EC" id="3.6.1.31"/>
    </reaction>
</comment>
<comment type="pathway">
    <text evidence="1">Amino-acid biosynthesis; L-histidine biosynthesis; L-histidine from 5-phospho-alpha-D-ribose 1-diphosphate: step 2/9.</text>
</comment>
<comment type="subcellular location">
    <subcellularLocation>
        <location evidence="1">Cytoplasm</location>
    </subcellularLocation>
</comment>
<comment type="similarity">
    <text evidence="1">Belongs to the PRA-PH family.</text>
</comment>
<feature type="chain" id="PRO_1000149040" description="Phosphoribosyl-ATP pyrophosphatase">
    <location>
        <begin position="1"/>
        <end position="104"/>
    </location>
</feature>
<accession>B9JG64</accession>
<gene>
    <name evidence="1" type="primary">hisE</name>
    <name type="ordered locus">Arad_0053</name>
</gene>
<keyword id="KW-0028">Amino-acid biosynthesis</keyword>
<keyword id="KW-0067">ATP-binding</keyword>
<keyword id="KW-0963">Cytoplasm</keyword>
<keyword id="KW-0368">Histidine biosynthesis</keyword>
<keyword id="KW-0378">Hydrolase</keyword>
<keyword id="KW-0547">Nucleotide-binding</keyword>
<sequence>MSGFTLSDLERIVDERSKAPPEESWTAKLCAAGQPKAAKKLGEEAIEAVMAAVTGDRDNLTYEAADLLYHLMVVLKIAGIPLQNVMGELERRTAQSGLQEKASR</sequence>
<organism>
    <name type="scientific">Rhizobium rhizogenes (strain K84 / ATCC BAA-868)</name>
    <name type="common">Agrobacterium radiobacter</name>
    <dbReference type="NCBI Taxonomy" id="311403"/>
    <lineage>
        <taxon>Bacteria</taxon>
        <taxon>Pseudomonadati</taxon>
        <taxon>Pseudomonadota</taxon>
        <taxon>Alphaproteobacteria</taxon>
        <taxon>Hyphomicrobiales</taxon>
        <taxon>Rhizobiaceae</taxon>
        <taxon>Rhizobium/Agrobacterium group</taxon>
        <taxon>Rhizobium</taxon>
    </lineage>
</organism>
<name>HIS2_RHIR8</name>
<evidence type="ECO:0000255" key="1">
    <source>
        <dbReference type="HAMAP-Rule" id="MF_01020"/>
    </source>
</evidence>
<dbReference type="EC" id="3.6.1.31" evidence="1"/>
<dbReference type="EMBL" id="CP000628">
    <property type="protein sequence ID" value="ACM24847.1"/>
    <property type="molecule type" value="Genomic_DNA"/>
</dbReference>
<dbReference type="RefSeq" id="WP_007698556.1">
    <property type="nucleotide sequence ID" value="NC_011985.1"/>
</dbReference>
<dbReference type="SMR" id="B9JG64"/>
<dbReference type="STRING" id="311403.Arad_0053"/>
<dbReference type="KEGG" id="ara:Arad_0053"/>
<dbReference type="eggNOG" id="COG0140">
    <property type="taxonomic scope" value="Bacteria"/>
</dbReference>
<dbReference type="HOGENOM" id="CLU_123337_1_1_5"/>
<dbReference type="UniPathway" id="UPA00031">
    <property type="reaction ID" value="UER00007"/>
</dbReference>
<dbReference type="Proteomes" id="UP000001600">
    <property type="component" value="Chromosome 1"/>
</dbReference>
<dbReference type="GO" id="GO:0005737">
    <property type="term" value="C:cytoplasm"/>
    <property type="evidence" value="ECO:0007669"/>
    <property type="project" value="UniProtKB-SubCell"/>
</dbReference>
<dbReference type="GO" id="GO:0005524">
    <property type="term" value="F:ATP binding"/>
    <property type="evidence" value="ECO:0007669"/>
    <property type="project" value="UniProtKB-KW"/>
</dbReference>
<dbReference type="GO" id="GO:0004636">
    <property type="term" value="F:phosphoribosyl-ATP diphosphatase activity"/>
    <property type="evidence" value="ECO:0007669"/>
    <property type="project" value="UniProtKB-UniRule"/>
</dbReference>
<dbReference type="GO" id="GO:0000105">
    <property type="term" value="P:L-histidine biosynthetic process"/>
    <property type="evidence" value="ECO:0007669"/>
    <property type="project" value="UniProtKB-UniRule"/>
</dbReference>
<dbReference type="CDD" id="cd11534">
    <property type="entry name" value="NTP-PPase_HisIE_like"/>
    <property type="match status" value="1"/>
</dbReference>
<dbReference type="Gene3D" id="1.10.287.1080">
    <property type="entry name" value="MazG-like"/>
    <property type="match status" value="1"/>
</dbReference>
<dbReference type="HAMAP" id="MF_01020">
    <property type="entry name" value="HisE"/>
    <property type="match status" value="1"/>
</dbReference>
<dbReference type="InterPro" id="IPR008179">
    <property type="entry name" value="HisE"/>
</dbReference>
<dbReference type="InterPro" id="IPR021130">
    <property type="entry name" value="PRib-ATP_PPHydrolase-like"/>
</dbReference>
<dbReference type="NCBIfam" id="TIGR03188">
    <property type="entry name" value="histidine_hisI"/>
    <property type="match status" value="1"/>
</dbReference>
<dbReference type="NCBIfam" id="NF001611">
    <property type="entry name" value="PRK00400.1-3"/>
    <property type="match status" value="1"/>
</dbReference>
<dbReference type="NCBIfam" id="NF001613">
    <property type="entry name" value="PRK00400.1-5"/>
    <property type="match status" value="1"/>
</dbReference>
<dbReference type="PANTHER" id="PTHR42945">
    <property type="entry name" value="HISTIDINE BIOSYNTHESIS BIFUNCTIONAL PROTEIN"/>
    <property type="match status" value="1"/>
</dbReference>
<dbReference type="PANTHER" id="PTHR42945:SF1">
    <property type="entry name" value="HISTIDINE BIOSYNTHESIS BIFUNCTIONAL PROTEIN HIS7"/>
    <property type="match status" value="1"/>
</dbReference>
<dbReference type="Pfam" id="PF01503">
    <property type="entry name" value="PRA-PH"/>
    <property type="match status" value="1"/>
</dbReference>
<dbReference type="SUPFAM" id="SSF101386">
    <property type="entry name" value="all-alpha NTP pyrophosphatases"/>
    <property type="match status" value="1"/>
</dbReference>
<protein>
    <recommendedName>
        <fullName evidence="1">Phosphoribosyl-ATP pyrophosphatase</fullName>
        <shortName evidence="1">PRA-PH</shortName>
        <ecNumber evidence="1">3.6.1.31</ecNumber>
    </recommendedName>
</protein>